<feature type="chain" id="PRO_0000195113" description="Aspartate/glutamate leucyltransferase">
    <location>
        <begin position="1"/>
        <end position="259"/>
    </location>
</feature>
<keyword id="KW-0012">Acyltransferase</keyword>
<keyword id="KW-0963">Cytoplasm</keyword>
<keyword id="KW-1185">Reference proteome</keyword>
<keyword id="KW-0808">Transferase</keyword>
<comment type="function">
    <text evidence="1">Functions in the N-end rule pathway of protein degradation where it conjugates Leu from its aminoacyl-tRNA to the N-termini of proteins containing an N-terminal aspartate or glutamate.</text>
</comment>
<comment type="catalytic activity">
    <reaction evidence="1">
        <text>N-terminal L-glutamyl-[protein] + L-leucyl-tRNA(Leu) = N-terminal L-leucyl-L-glutamyl-[protein] + tRNA(Leu) + H(+)</text>
        <dbReference type="Rhea" id="RHEA:50412"/>
        <dbReference type="Rhea" id="RHEA-COMP:9613"/>
        <dbReference type="Rhea" id="RHEA-COMP:9622"/>
        <dbReference type="Rhea" id="RHEA-COMP:12664"/>
        <dbReference type="Rhea" id="RHEA-COMP:12668"/>
        <dbReference type="ChEBI" id="CHEBI:15378"/>
        <dbReference type="ChEBI" id="CHEBI:64721"/>
        <dbReference type="ChEBI" id="CHEBI:78442"/>
        <dbReference type="ChEBI" id="CHEBI:78494"/>
        <dbReference type="ChEBI" id="CHEBI:133041"/>
        <dbReference type="EC" id="2.3.2.29"/>
    </reaction>
</comment>
<comment type="catalytic activity">
    <reaction evidence="1">
        <text>N-terminal L-aspartyl-[protein] + L-leucyl-tRNA(Leu) = N-terminal L-leucyl-L-aspartyl-[protein] + tRNA(Leu) + H(+)</text>
        <dbReference type="Rhea" id="RHEA:50420"/>
        <dbReference type="Rhea" id="RHEA-COMP:9613"/>
        <dbReference type="Rhea" id="RHEA-COMP:9622"/>
        <dbReference type="Rhea" id="RHEA-COMP:12669"/>
        <dbReference type="Rhea" id="RHEA-COMP:12674"/>
        <dbReference type="ChEBI" id="CHEBI:15378"/>
        <dbReference type="ChEBI" id="CHEBI:64720"/>
        <dbReference type="ChEBI" id="CHEBI:78442"/>
        <dbReference type="ChEBI" id="CHEBI:78494"/>
        <dbReference type="ChEBI" id="CHEBI:133042"/>
        <dbReference type="EC" id="2.3.2.29"/>
    </reaction>
</comment>
<comment type="subcellular location">
    <subcellularLocation>
        <location evidence="1">Cytoplasm</location>
    </subcellularLocation>
</comment>
<comment type="similarity">
    <text evidence="1">Belongs to the R-transferase family. Bpt subfamily.</text>
</comment>
<accession>Q92KF8</accession>
<proteinExistence type="inferred from homology"/>
<organism>
    <name type="scientific">Rhizobium meliloti (strain 1021)</name>
    <name type="common">Ensifer meliloti</name>
    <name type="synonym">Sinorhizobium meliloti</name>
    <dbReference type="NCBI Taxonomy" id="266834"/>
    <lineage>
        <taxon>Bacteria</taxon>
        <taxon>Pseudomonadati</taxon>
        <taxon>Pseudomonadota</taxon>
        <taxon>Alphaproteobacteria</taxon>
        <taxon>Hyphomicrobiales</taxon>
        <taxon>Rhizobiaceae</taxon>
        <taxon>Sinorhizobium/Ensifer group</taxon>
        <taxon>Sinorhizobium</taxon>
    </lineage>
</organism>
<evidence type="ECO:0000255" key="1">
    <source>
        <dbReference type="HAMAP-Rule" id="MF_00689"/>
    </source>
</evidence>
<reference key="1">
    <citation type="journal article" date="2001" name="Proc. Natl. Acad. Sci. U.S.A.">
        <title>Analysis of the chromosome sequence of the legume symbiont Sinorhizobium meliloti strain 1021.</title>
        <authorList>
            <person name="Capela D."/>
            <person name="Barloy-Hubler F."/>
            <person name="Gouzy J."/>
            <person name="Bothe G."/>
            <person name="Ampe F."/>
            <person name="Batut J."/>
            <person name="Boistard P."/>
            <person name="Becker A."/>
            <person name="Boutry M."/>
            <person name="Cadieu E."/>
            <person name="Dreano S."/>
            <person name="Gloux S."/>
            <person name="Godrie T."/>
            <person name="Goffeau A."/>
            <person name="Kahn D."/>
            <person name="Kiss E."/>
            <person name="Lelaure V."/>
            <person name="Masuy D."/>
            <person name="Pohl T."/>
            <person name="Portetelle D."/>
            <person name="Puehler A."/>
            <person name="Purnelle B."/>
            <person name="Ramsperger U."/>
            <person name="Renard C."/>
            <person name="Thebault P."/>
            <person name="Vandenbol M."/>
            <person name="Weidner S."/>
            <person name="Galibert F."/>
        </authorList>
    </citation>
    <scope>NUCLEOTIDE SEQUENCE [LARGE SCALE GENOMIC DNA]</scope>
    <source>
        <strain>1021</strain>
    </source>
</reference>
<reference key="2">
    <citation type="journal article" date="2001" name="Science">
        <title>The composite genome of the legume symbiont Sinorhizobium meliloti.</title>
        <authorList>
            <person name="Galibert F."/>
            <person name="Finan T.M."/>
            <person name="Long S.R."/>
            <person name="Puehler A."/>
            <person name="Abola P."/>
            <person name="Ampe F."/>
            <person name="Barloy-Hubler F."/>
            <person name="Barnett M.J."/>
            <person name="Becker A."/>
            <person name="Boistard P."/>
            <person name="Bothe G."/>
            <person name="Boutry M."/>
            <person name="Bowser L."/>
            <person name="Buhrmester J."/>
            <person name="Cadieu E."/>
            <person name="Capela D."/>
            <person name="Chain P."/>
            <person name="Cowie A."/>
            <person name="Davis R.W."/>
            <person name="Dreano S."/>
            <person name="Federspiel N.A."/>
            <person name="Fisher R.F."/>
            <person name="Gloux S."/>
            <person name="Godrie T."/>
            <person name="Goffeau A."/>
            <person name="Golding B."/>
            <person name="Gouzy J."/>
            <person name="Gurjal M."/>
            <person name="Hernandez-Lucas I."/>
            <person name="Hong A."/>
            <person name="Huizar L."/>
            <person name="Hyman R.W."/>
            <person name="Jones T."/>
            <person name="Kahn D."/>
            <person name="Kahn M.L."/>
            <person name="Kalman S."/>
            <person name="Keating D.H."/>
            <person name="Kiss E."/>
            <person name="Komp C."/>
            <person name="Lelaure V."/>
            <person name="Masuy D."/>
            <person name="Palm C."/>
            <person name="Peck M.C."/>
            <person name="Pohl T.M."/>
            <person name="Portetelle D."/>
            <person name="Purnelle B."/>
            <person name="Ramsperger U."/>
            <person name="Surzycki R."/>
            <person name="Thebault P."/>
            <person name="Vandenbol M."/>
            <person name="Vorhoelter F.J."/>
            <person name="Weidner S."/>
            <person name="Wells D.H."/>
            <person name="Wong K."/>
            <person name="Yeh K.-C."/>
            <person name="Batut J."/>
        </authorList>
    </citation>
    <scope>NUCLEOTIDE SEQUENCE [LARGE SCALE GENOMIC DNA]</scope>
    <source>
        <strain>1021</strain>
    </source>
</reference>
<gene>
    <name evidence="1" type="primary">bpt</name>
    <name type="ordered locus">R01202</name>
    <name type="ORF">SMc01764</name>
</gene>
<name>BPT_RHIME</name>
<sequence length="259" mass="29545">MNTQTAPSPQFYLTAPAACPYLPNQMERKVFTHMVGERAPELNDLLTQGGFRRSQNIAYRPACETCRACISVRILTNEFAPTRSMRRVLAANGEIVSAEYPAEPSSEQYNLFRRYLDCRHQKGGMSDMSVLDYAMMVEDTHVHTKIIEYRLRVEGDGINDKARGPLIATALTDRMSDGLSMVYSFFDPALSERSLGTYMILDHIRRAKERGLPHVYLGYWVKGSRKMGYKTKFLPQEHLMARGWERYSGEHDSTKPATD</sequence>
<dbReference type="EC" id="2.3.2.29" evidence="1"/>
<dbReference type="EMBL" id="AL591688">
    <property type="protein sequence ID" value="CAC45781.1"/>
    <property type="molecule type" value="Genomic_DNA"/>
</dbReference>
<dbReference type="RefSeq" id="NP_385308.1">
    <property type="nucleotide sequence ID" value="NC_003047.1"/>
</dbReference>
<dbReference type="RefSeq" id="WP_010969108.1">
    <property type="nucleotide sequence ID" value="NC_003047.1"/>
</dbReference>
<dbReference type="SMR" id="Q92KF8"/>
<dbReference type="EnsemblBacteria" id="CAC45781">
    <property type="protein sequence ID" value="CAC45781"/>
    <property type="gene ID" value="SMc01764"/>
</dbReference>
<dbReference type="KEGG" id="sme:SMc01764"/>
<dbReference type="PATRIC" id="fig|266834.11.peg.2613"/>
<dbReference type="eggNOG" id="COG2935">
    <property type="taxonomic scope" value="Bacteria"/>
</dbReference>
<dbReference type="HOGENOM" id="CLU_077607_1_0_5"/>
<dbReference type="OrthoDB" id="9782022at2"/>
<dbReference type="Proteomes" id="UP000001976">
    <property type="component" value="Chromosome"/>
</dbReference>
<dbReference type="GO" id="GO:0005737">
    <property type="term" value="C:cytoplasm"/>
    <property type="evidence" value="ECO:0007669"/>
    <property type="project" value="UniProtKB-SubCell"/>
</dbReference>
<dbReference type="GO" id="GO:0004057">
    <property type="term" value="F:arginyl-tRNA--protein transferase activity"/>
    <property type="evidence" value="ECO:0007669"/>
    <property type="project" value="InterPro"/>
</dbReference>
<dbReference type="GO" id="GO:0008914">
    <property type="term" value="F:leucyl-tRNA--protein transferase activity"/>
    <property type="evidence" value="ECO:0007669"/>
    <property type="project" value="UniProtKB-UniRule"/>
</dbReference>
<dbReference type="GO" id="GO:0071596">
    <property type="term" value="P:ubiquitin-dependent protein catabolic process via the N-end rule pathway"/>
    <property type="evidence" value="ECO:0007669"/>
    <property type="project" value="InterPro"/>
</dbReference>
<dbReference type="HAMAP" id="MF_00689">
    <property type="entry name" value="Bpt"/>
    <property type="match status" value="1"/>
</dbReference>
<dbReference type="InterPro" id="IPR016181">
    <property type="entry name" value="Acyl_CoA_acyltransferase"/>
</dbReference>
<dbReference type="InterPro" id="IPR017138">
    <property type="entry name" value="Asp_Glu_LeuTrfase"/>
</dbReference>
<dbReference type="InterPro" id="IPR030700">
    <property type="entry name" value="N-end_Aminoacyl_Trfase"/>
</dbReference>
<dbReference type="InterPro" id="IPR007472">
    <property type="entry name" value="N-end_Aminoacyl_Trfase_C"/>
</dbReference>
<dbReference type="InterPro" id="IPR007471">
    <property type="entry name" value="N-end_Aminoacyl_Trfase_N"/>
</dbReference>
<dbReference type="NCBIfam" id="NF002342">
    <property type="entry name" value="PRK01305.1-3"/>
    <property type="match status" value="1"/>
</dbReference>
<dbReference type="NCBIfam" id="NF002343">
    <property type="entry name" value="PRK01305.1-4"/>
    <property type="match status" value="1"/>
</dbReference>
<dbReference type="NCBIfam" id="NF002346">
    <property type="entry name" value="PRK01305.2-3"/>
    <property type="match status" value="1"/>
</dbReference>
<dbReference type="PANTHER" id="PTHR21367">
    <property type="entry name" value="ARGININE-TRNA-PROTEIN TRANSFERASE 1"/>
    <property type="match status" value="1"/>
</dbReference>
<dbReference type="PANTHER" id="PTHR21367:SF1">
    <property type="entry name" value="ARGINYL-TRNA--PROTEIN TRANSFERASE 1"/>
    <property type="match status" value="1"/>
</dbReference>
<dbReference type="Pfam" id="PF04377">
    <property type="entry name" value="ATE_C"/>
    <property type="match status" value="1"/>
</dbReference>
<dbReference type="Pfam" id="PF04376">
    <property type="entry name" value="ATE_N"/>
    <property type="match status" value="1"/>
</dbReference>
<dbReference type="PIRSF" id="PIRSF037208">
    <property type="entry name" value="ATE_pro_prd"/>
    <property type="match status" value="1"/>
</dbReference>
<dbReference type="SUPFAM" id="SSF55729">
    <property type="entry name" value="Acyl-CoA N-acyltransferases (Nat)"/>
    <property type="match status" value="1"/>
</dbReference>
<protein>
    <recommendedName>
        <fullName evidence="1">Aspartate/glutamate leucyltransferase</fullName>
        <ecNumber evidence="1">2.3.2.29</ecNumber>
    </recommendedName>
</protein>